<accession>I6Y9Q3</accession>
<protein>
    <recommendedName>
        <fullName evidence="7">2-methylcitrate synthase</fullName>
        <shortName evidence="7">2-MCS</shortName>
        <shortName evidence="7">MCS</shortName>
        <ecNumber evidence="1">2.3.3.5</ecNumber>
    </recommendedName>
    <alternativeName>
        <fullName evidence="7">Citrate synthase</fullName>
        <ecNumber evidence="1">2.3.3.16</ecNumber>
    </alternativeName>
</protein>
<keyword id="KW-0002">3D-structure</keyword>
<keyword id="KW-1185">Reference proteome</keyword>
<keyword id="KW-0808">Transferase</keyword>
<keyword id="KW-0816">Tricarboxylic acid cycle</keyword>
<organism>
    <name type="scientific">Mycobacterium tuberculosis (strain ATCC 25618 / H37Rv)</name>
    <dbReference type="NCBI Taxonomy" id="83332"/>
    <lineage>
        <taxon>Bacteria</taxon>
        <taxon>Bacillati</taxon>
        <taxon>Actinomycetota</taxon>
        <taxon>Actinomycetes</taxon>
        <taxon>Mycobacteriales</taxon>
        <taxon>Mycobacteriaceae</taxon>
        <taxon>Mycobacterium</taxon>
        <taxon>Mycobacterium tuberculosis complex</taxon>
    </lineage>
</organism>
<name>PRPC_MYCTU</name>
<gene>
    <name type="primary">prpC</name>
    <name type="ordered locus">Rv1131</name>
    <name type="ordered locus">RVBD_1131</name>
    <name type="ORF">P425_01180</name>
</gene>
<comment type="function">
    <text evidence="3 4">Involved in the catabolism of short chain fatty acids (SCFA) via the tricarboxylic acid (TCA)(acetyl degradation route) and via the 2-methylcitrate cycle I (propionate degradation route). Catalyzes the Claisen condensation of propionyl-CoA and oxaloacetate (OAA) to yield 2-methylcitrate (2-MC) and CoA. Also catalyzes the condensation of oxaloacetate with acetyl-CoA.</text>
</comment>
<comment type="catalytic activity">
    <reaction evidence="1">
        <text>propanoyl-CoA + oxaloacetate + H2O = (2S,3S)-2-methylcitrate + CoA + H(+)</text>
        <dbReference type="Rhea" id="RHEA:23780"/>
        <dbReference type="ChEBI" id="CHEBI:15377"/>
        <dbReference type="ChEBI" id="CHEBI:15378"/>
        <dbReference type="ChEBI" id="CHEBI:16452"/>
        <dbReference type="ChEBI" id="CHEBI:57287"/>
        <dbReference type="ChEBI" id="CHEBI:57392"/>
        <dbReference type="ChEBI" id="CHEBI:58853"/>
        <dbReference type="EC" id="2.3.3.5"/>
    </reaction>
</comment>
<comment type="catalytic activity">
    <reaction evidence="1">
        <text>oxaloacetate + acetyl-CoA + H2O = citrate + CoA + H(+)</text>
        <dbReference type="Rhea" id="RHEA:16845"/>
        <dbReference type="ChEBI" id="CHEBI:15377"/>
        <dbReference type="ChEBI" id="CHEBI:15378"/>
        <dbReference type="ChEBI" id="CHEBI:16452"/>
        <dbReference type="ChEBI" id="CHEBI:16947"/>
        <dbReference type="ChEBI" id="CHEBI:57287"/>
        <dbReference type="ChEBI" id="CHEBI:57288"/>
        <dbReference type="EC" id="2.3.3.16"/>
    </reaction>
</comment>
<comment type="pathway">
    <text evidence="9">Organic acid metabolism; propanoate degradation.</text>
</comment>
<comment type="pathway">
    <text evidence="9">Carbohydrate metabolism; tricarboxylic acid cycle; isocitrate from oxaloacetate: step 1/2.</text>
</comment>
<comment type="subunit">
    <text evidence="6">Homodimer.</text>
</comment>
<comment type="induction">
    <text evidence="5">Activated by PrpR.</text>
</comment>
<comment type="disruption phenotype">
    <text evidence="3 4">Cells lacking both prpC and prpD genes are unable to grow on propionate or cholesterol as the sole carbon source.</text>
</comment>
<comment type="miscellaneous">
    <text evidence="3">The vitamin B12 restores growth of the prpDC mutant. It suggests the capacity of the MCM-dependent methylmalonyl pathway to support the metabolism of propionate independently of the methylcitrate cycle.</text>
</comment>
<comment type="similarity">
    <text evidence="8">Belongs to the citrate synthase family.</text>
</comment>
<dbReference type="EC" id="2.3.3.5" evidence="1"/>
<dbReference type="EC" id="2.3.3.16" evidence="1"/>
<dbReference type="EMBL" id="AL123456">
    <property type="protein sequence ID" value="CCP43885.1"/>
    <property type="molecule type" value="Genomic_DNA"/>
</dbReference>
<dbReference type="EMBL" id="CP003248">
    <property type="protein sequence ID" value="AFN49030.1"/>
    <property type="molecule type" value="Genomic_DNA"/>
</dbReference>
<dbReference type="EMBL" id="JLDD01000012">
    <property type="protein sequence ID" value="KBJ36377.1"/>
    <property type="molecule type" value="Genomic_DNA"/>
</dbReference>
<dbReference type="RefSeq" id="NP_215647.1">
    <property type="nucleotide sequence ID" value="NC_000962.3"/>
</dbReference>
<dbReference type="RefSeq" id="WP_003405909.1">
    <property type="nucleotide sequence ID" value="NZ_NVQJ01000021.1"/>
</dbReference>
<dbReference type="PDB" id="3HWK">
    <property type="method" value="X-ray"/>
    <property type="resolution" value="2.30 A"/>
    <property type="chains" value="A/B/C/D/E/F/G/H=1-393"/>
</dbReference>
<dbReference type="PDBsum" id="3HWK"/>
<dbReference type="SMR" id="I6Y9Q3"/>
<dbReference type="FunCoup" id="I6Y9Q3">
    <property type="interactions" value="346"/>
</dbReference>
<dbReference type="STRING" id="83332.Rv1131"/>
<dbReference type="PaxDb" id="83332-Rv1131"/>
<dbReference type="DNASU" id="888949"/>
<dbReference type="GeneID" id="888949"/>
<dbReference type="KEGG" id="mtu:Rv1131"/>
<dbReference type="KEGG" id="mtv:RVBD_1131"/>
<dbReference type="PATRIC" id="fig|83332.111.peg.1263"/>
<dbReference type="TubercuList" id="Rv1131"/>
<dbReference type="eggNOG" id="COG0372">
    <property type="taxonomic scope" value="Bacteria"/>
</dbReference>
<dbReference type="InParanoid" id="I6Y9Q3"/>
<dbReference type="OrthoDB" id="9800864at2"/>
<dbReference type="PhylomeDB" id="I6Y9Q3"/>
<dbReference type="UniPathway" id="UPA00223">
    <property type="reaction ID" value="UER00717"/>
</dbReference>
<dbReference type="UniPathway" id="UPA00946"/>
<dbReference type="EvolutionaryTrace" id="I6Y9Q3"/>
<dbReference type="Proteomes" id="UP000001584">
    <property type="component" value="Chromosome"/>
</dbReference>
<dbReference type="GO" id="GO:0005737">
    <property type="term" value="C:cytoplasm"/>
    <property type="evidence" value="ECO:0007669"/>
    <property type="project" value="InterPro"/>
</dbReference>
<dbReference type="GO" id="GO:0050440">
    <property type="term" value="F:2-methylcitrate synthase activity"/>
    <property type="evidence" value="ECO:0000250"/>
    <property type="project" value="UniProtKB"/>
</dbReference>
<dbReference type="GO" id="GO:0004108">
    <property type="term" value="F:citrate (Si)-synthase activity"/>
    <property type="evidence" value="ECO:0000318"/>
    <property type="project" value="GO_Central"/>
</dbReference>
<dbReference type="GO" id="GO:0036440">
    <property type="term" value="F:citrate synthase activity"/>
    <property type="evidence" value="ECO:0000250"/>
    <property type="project" value="UniProtKB"/>
</dbReference>
<dbReference type="GO" id="GO:0005975">
    <property type="term" value="P:carbohydrate metabolic process"/>
    <property type="evidence" value="ECO:0000318"/>
    <property type="project" value="GO_Central"/>
</dbReference>
<dbReference type="GO" id="GO:0019679">
    <property type="term" value="P:propionate metabolic process, methylcitrate cycle"/>
    <property type="evidence" value="ECO:0000315"/>
    <property type="project" value="UniProtKB"/>
</dbReference>
<dbReference type="GO" id="GO:0006099">
    <property type="term" value="P:tricarboxylic acid cycle"/>
    <property type="evidence" value="ECO:0000318"/>
    <property type="project" value="GO_Central"/>
</dbReference>
<dbReference type="CDD" id="cd06111">
    <property type="entry name" value="DsCS_like"/>
    <property type="match status" value="1"/>
</dbReference>
<dbReference type="FunFam" id="1.10.230.10:FF:000003">
    <property type="entry name" value="Citrate synthase"/>
    <property type="match status" value="1"/>
</dbReference>
<dbReference type="FunFam" id="1.10.580.10:FF:000012">
    <property type="entry name" value="Citrate synthase"/>
    <property type="match status" value="1"/>
</dbReference>
<dbReference type="Gene3D" id="1.10.580.10">
    <property type="entry name" value="Citrate Synthase, domain 1"/>
    <property type="match status" value="1"/>
</dbReference>
<dbReference type="Gene3D" id="1.10.230.10">
    <property type="entry name" value="Cytochrome P450-Terp, domain 2"/>
    <property type="match status" value="1"/>
</dbReference>
<dbReference type="InterPro" id="IPR011278">
    <property type="entry name" value="2-MeCitrate/Citrate_synth_II"/>
</dbReference>
<dbReference type="InterPro" id="IPR016142">
    <property type="entry name" value="Citrate_synth-like_lrg_a-sub"/>
</dbReference>
<dbReference type="InterPro" id="IPR016143">
    <property type="entry name" value="Citrate_synth-like_sm_a-sub"/>
</dbReference>
<dbReference type="InterPro" id="IPR002020">
    <property type="entry name" value="Citrate_synthase"/>
</dbReference>
<dbReference type="InterPro" id="IPR019810">
    <property type="entry name" value="Citrate_synthase_AS"/>
</dbReference>
<dbReference type="InterPro" id="IPR024176">
    <property type="entry name" value="Citrate_synthase_bac-typ"/>
</dbReference>
<dbReference type="InterPro" id="IPR036969">
    <property type="entry name" value="Citrate_synthase_sf"/>
</dbReference>
<dbReference type="NCBIfam" id="TIGR01800">
    <property type="entry name" value="cit_synth_II"/>
    <property type="match status" value="1"/>
</dbReference>
<dbReference type="NCBIfam" id="NF010636">
    <property type="entry name" value="PRK14033.1"/>
    <property type="match status" value="1"/>
</dbReference>
<dbReference type="PANTHER" id="PTHR11739">
    <property type="entry name" value="CITRATE SYNTHASE"/>
    <property type="match status" value="1"/>
</dbReference>
<dbReference type="PANTHER" id="PTHR11739:SF4">
    <property type="entry name" value="CITRATE SYNTHASE, PEROXISOMAL"/>
    <property type="match status" value="1"/>
</dbReference>
<dbReference type="Pfam" id="PF00285">
    <property type="entry name" value="Citrate_synt"/>
    <property type="match status" value="1"/>
</dbReference>
<dbReference type="PIRSF" id="PIRSF001369">
    <property type="entry name" value="Citrate_synth"/>
    <property type="match status" value="1"/>
</dbReference>
<dbReference type="PRINTS" id="PR00143">
    <property type="entry name" value="CITRTSNTHASE"/>
</dbReference>
<dbReference type="SUPFAM" id="SSF48256">
    <property type="entry name" value="Citrate synthase"/>
    <property type="match status" value="1"/>
</dbReference>
<dbReference type="PROSITE" id="PS00480">
    <property type="entry name" value="CITRATE_SYNTHASE"/>
    <property type="match status" value="1"/>
</dbReference>
<reference key="1">
    <citation type="journal article" date="1998" name="Nature">
        <title>Deciphering the biology of Mycobacterium tuberculosis from the complete genome sequence.</title>
        <authorList>
            <person name="Cole S.T."/>
            <person name="Brosch R."/>
            <person name="Parkhill J."/>
            <person name="Garnier T."/>
            <person name="Churcher C.M."/>
            <person name="Harris D.E."/>
            <person name="Gordon S.V."/>
            <person name="Eiglmeier K."/>
            <person name="Gas S."/>
            <person name="Barry C.E. III"/>
            <person name="Tekaia F."/>
            <person name="Badcock K."/>
            <person name="Basham D."/>
            <person name="Brown D."/>
            <person name="Chillingworth T."/>
            <person name="Connor R."/>
            <person name="Davies R.M."/>
            <person name="Devlin K."/>
            <person name="Feltwell T."/>
            <person name="Gentles S."/>
            <person name="Hamlin N."/>
            <person name="Holroyd S."/>
            <person name="Hornsby T."/>
            <person name="Jagels K."/>
            <person name="Krogh A."/>
            <person name="McLean J."/>
            <person name="Moule S."/>
            <person name="Murphy L.D."/>
            <person name="Oliver S."/>
            <person name="Osborne J."/>
            <person name="Quail M.A."/>
            <person name="Rajandream M.A."/>
            <person name="Rogers J."/>
            <person name="Rutter S."/>
            <person name="Seeger K."/>
            <person name="Skelton S."/>
            <person name="Squares S."/>
            <person name="Squares R."/>
            <person name="Sulston J.E."/>
            <person name="Taylor K."/>
            <person name="Whitehead S."/>
            <person name="Barrell B.G."/>
        </authorList>
    </citation>
    <scope>NUCLEOTIDE SEQUENCE [LARGE SCALE GENOMIC DNA]</scope>
    <source>
        <strain>ATCC 25618 / H37Rv</strain>
    </source>
</reference>
<reference key="2">
    <citation type="submission" date="2013-11" db="EMBL/GenBank/DDBJ databases">
        <title>The genome sequence of Mycobacterium tuberculosis H37Rv.</title>
        <authorList>
            <consortium name="The Broad Institute Genome Sequencing Platform"/>
            <person name="Galagan J."/>
            <person name="Kreiswirth B."/>
            <person name="Dobos K."/>
            <person name="Fortune S."/>
            <person name="Fitzgerald M."/>
            <person name="Young S.K."/>
            <person name="Zeng Q."/>
            <person name="Gargeya S."/>
            <person name="Abouelleil A."/>
            <person name="Alvarado L."/>
            <person name="Berlin A.M."/>
            <person name="Chapman S.B."/>
            <person name="Gainer-Dewar J."/>
            <person name="Goldberg J."/>
            <person name="Gnerre S."/>
            <person name="Griggs A."/>
            <person name="Gujja S."/>
            <person name="Hansen M."/>
            <person name="Howarth C."/>
            <person name="Imamovic A."/>
            <person name="Larimer J."/>
            <person name="McCowan C."/>
            <person name="Murphy C."/>
            <person name="Pearson M."/>
            <person name="Poon T."/>
            <person name="Priest M."/>
            <person name="Roberts A."/>
            <person name="Saif S."/>
            <person name="Shea T."/>
            <person name="Sykes S."/>
            <person name="Wortman J."/>
            <person name="Nusbaum C."/>
            <person name="Birren B."/>
        </authorList>
    </citation>
    <scope>NUCLEOTIDE SEQUENCE [LARGE SCALE GENOMIC DNA]</scope>
    <source>
        <strain>ATCC 25618 / H37Rv</strain>
    </source>
</reference>
<reference key="3">
    <citation type="submission" date="2014-04" db="EMBL/GenBank/DDBJ databases">
        <title>The genome sequence of Mycobacterium tuberculosis H37Rv.</title>
        <authorList>
            <consortium name="The Broad Institute Genomics Platform"/>
            <consortium name="The Broad Institute Genome Sequencing Center for Infectious Disease"/>
            <person name="Earl A.M."/>
            <person name="Kreiswirth B."/>
            <person name="Gomez J."/>
            <person name="Victor T."/>
            <person name="Desjardins C."/>
            <person name="Abeel T."/>
            <person name="Young S."/>
            <person name="Zeng Q."/>
            <person name="Gargeya S."/>
            <person name="Abouelleil A."/>
            <person name="Alvarado L."/>
            <person name="Chapman S.B."/>
            <person name="Gainer-Dewar J."/>
            <person name="Goldberg J."/>
            <person name="Griggs A."/>
            <person name="Gujja S."/>
            <person name="Hansen M."/>
            <person name="Howarth C."/>
            <person name="Imamovic A."/>
            <person name="Larimer J."/>
            <person name="Murphy C."/>
            <person name="Naylor J."/>
            <person name="Pearson M."/>
            <person name="Poon T.W."/>
            <person name="Priest M."/>
            <person name="Roberts A."/>
            <person name="Saif S."/>
            <person name="Shea T."/>
            <person name="Sykes S."/>
            <person name="Wortman J."/>
            <person name="Nusbaum C."/>
            <person name="Birren B."/>
        </authorList>
    </citation>
    <scope>NUCLEOTIDE SEQUENCE [LARGE SCALE GENOMIC DNA]</scope>
    <source>
        <strain>H37Rv</strain>
    </source>
</reference>
<reference key="4">
    <citation type="journal article" date="2008" name="J. Bacteriol.">
        <title>Functional characterization of a vitamin B12-dependent methylmalonyl pathway in Mycobacterium tuberculosis: implications for propionate metabolism during growth on fatty acids.</title>
        <authorList>
            <person name="Savvi S."/>
            <person name="Warner D.F."/>
            <person name="Kana B.D."/>
            <person name="McKinney J.D."/>
            <person name="Mizrahi V."/>
            <person name="Dawes S.S."/>
        </authorList>
    </citation>
    <scope>FUNCTION</scope>
    <scope>DISRUPTION PHENOTYPE</scope>
    <scope>SUBSTRATE SPECIFICITY</scope>
    <source>
        <strain>ATCC 25618 / H37Rv</strain>
    </source>
</reference>
<reference key="5">
    <citation type="journal article" date="2011" name="Mol. Cell. Proteomics">
        <title>Proteogenomic analysis of Mycobacterium tuberculosis by high resolution mass spectrometry.</title>
        <authorList>
            <person name="Kelkar D.S."/>
            <person name="Kumar D."/>
            <person name="Kumar P."/>
            <person name="Balakrishnan L."/>
            <person name="Muthusamy B."/>
            <person name="Yadav A.K."/>
            <person name="Shrivastava P."/>
            <person name="Marimuthu A."/>
            <person name="Anand S."/>
            <person name="Sundaram H."/>
            <person name="Kingsbury R."/>
            <person name="Harsha H.C."/>
            <person name="Nair B."/>
            <person name="Prasad T.S."/>
            <person name="Chauhan D.S."/>
            <person name="Katoch K."/>
            <person name="Katoch V.M."/>
            <person name="Kumar P."/>
            <person name="Chaerkady R."/>
            <person name="Ramachandran S."/>
            <person name="Dash D."/>
            <person name="Pandey A."/>
        </authorList>
    </citation>
    <scope>IDENTIFICATION BY MASS SPECTROMETRY [LARGE SCALE ANALYSIS]</scope>
    <source>
        <strain>ATCC 25618 / H37Rv</strain>
    </source>
</reference>
<reference key="6">
    <citation type="journal article" date="2012" name="Chem. Biol.">
        <title>Cholesterol catabolism by Mycobacterium tuberculosis requires transcriptional and metabolic adaptations.</title>
        <authorList>
            <person name="Griffin J.E."/>
            <person name="Pandey A.K."/>
            <person name="Gilmore S.A."/>
            <person name="Mizrahi V."/>
            <person name="McKinney J.D."/>
            <person name="Bertozzi C.R."/>
            <person name="Sassetti C.M."/>
        </authorList>
    </citation>
    <scope>FUNCTION</scope>
    <scope>DISRUPTION PHENOTYPE</scope>
    <source>
        <strain>H37Rv</strain>
    </source>
</reference>
<reference key="7">
    <citation type="journal article" date="2012" name="PLoS ONE">
        <title>A novel role of the PrpR as a transcription factor involved in the regulation of methylcitrate pathway in Mycobacterium tuberculosis.</title>
        <authorList>
            <person name="Masiewicz P."/>
            <person name="Brzostek A."/>
            <person name="Wolanski M."/>
            <person name="Dziadek J."/>
            <person name="Zakrzewska-Czerwinska J."/>
        </authorList>
    </citation>
    <scope>INDUCTION</scope>
    <source>
        <strain>H37Rv</strain>
    </source>
</reference>
<reference key="8">
    <citation type="submission" date="2009-06" db="PDB data bank">
        <title>Crystal structure of methylcitrate synthase from Mycobacterium tuberculosis.</title>
        <authorList>
            <consortium name="Seattle Structural Genomics Center for Infectious Disease (SSGCID)"/>
            <person name="Edwards T.E."/>
            <person name="Staker B.L."/>
        </authorList>
    </citation>
    <scope>X-RAY CRYSTALLOGRAPHY (2.30 ANGSTROMS) IN COMPLEX WITH SUBSTRATE ANALOG</scope>
    <scope>SUBUNIT</scope>
    <source>
        <strain>H37Rv</strain>
    </source>
</reference>
<proteinExistence type="evidence at protein level"/>
<feature type="chain" id="PRO_0000432969" description="2-methylcitrate synthase">
    <location>
        <begin position="1"/>
        <end position="393"/>
    </location>
</feature>
<feature type="active site" evidence="2">
    <location>
        <position position="242"/>
    </location>
</feature>
<feature type="active site" evidence="6">
    <location>
        <position position="281"/>
    </location>
</feature>
<feature type="active site" evidence="2">
    <location>
        <position position="332"/>
    </location>
</feature>
<feature type="binding site" evidence="6">
    <location>
        <position position="92"/>
    </location>
    <ligand>
        <name>substrate</name>
    </ligand>
</feature>
<feature type="binding site" evidence="6">
    <location>
        <position position="207"/>
    </location>
    <ligand>
        <name>substrate</name>
    </ligand>
</feature>
<feature type="binding site" evidence="2">
    <location>
        <begin position="275"/>
        <end position="279"/>
    </location>
    <ligand>
        <name>CoA</name>
        <dbReference type="ChEBI" id="CHEBI:57287"/>
    </ligand>
</feature>
<feature type="binding site" evidence="6">
    <location>
        <position position="290"/>
    </location>
    <ligand>
        <name>substrate</name>
    </ligand>
</feature>
<feature type="binding site" evidence="6">
    <location>
        <position position="357"/>
    </location>
    <ligand>
        <name>substrate</name>
    </ligand>
</feature>
<feature type="binding site" evidence="6">
    <location>
        <position position="376"/>
    </location>
    <ligand>
        <name>substrate</name>
    </ligand>
</feature>
<feature type="helix" evidence="10">
    <location>
        <begin position="30"/>
        <end position="32"/>
    </location>
</feature>
<feature type="strand" evidence="10">
    <location>
        <begin position="36"/>
        <end position="46"/>
    </location>
</feature>
<feature type="turn" evidence="10">
    <location>
        <begin position="47"/>
        <end position="50"/>
    </location>
</feature>
<feature type="strand" evidence="10">
    <location>
        <begin position="51"/>
        <end position="54"/>
    </location>
</feature>
<feature type="helix" evidence="10">
    <location>
        <begin position="59"/>
        <end position="65"/>
    </location>
</feature>
<feature type="helix" evidence="10">
    <location>
        <begin position="68"/>
        <end position="77"/>
    </location>
</feature>
<feature type="helix" evidence="10">
    <location>
        <begin position="83"/>
        <end position="95"/>
    </location>
</feature>
<feature type="helix" evidence="10">
    <location>
        <begin position="101"/>
        <end position="109"/>
    </location>
</feature>
<feature type="helix" evidence="10">
    <location>
        <begin position="116"/>
        <end position="129"/>
    </location>
</feature>
<feature type="turn" evidence="10">
    <location>
        <begin position="132"/>
        <end position="135"/>
    </location>
</feature>
<feature type="helix" evidence="10">
    <location>
        <begin position="137"/>
        <end position="139"/>
    </location>
</feature>
<feature type="helix" evidence="10">
    <location>
        <begin position="140"/>
        <end position="162"/>
    </location>
</feature>
<feature type="helix" evidence="10">
    <location>
        <begin position="176"/>
        <end position="185"/>
    </location>
</feature>
<feature type="helix" evidence="10">
    <location>
        <begin position="191"/>
        <end position="203"/>
    </location>
</feature>
<feature type="helix" evidence="10">
    <location>
        <begin position="211"/>
        <end position="220"/>
    </location>
</feature>
<feature type="turn" evidence="10">
    <location>
        <begin position="221"/>
        <end position="223"/>
    </location>
</feature>
<feature type="helix" evidence="10">
    <location>
        <begin position="226"/>
        <end position="237"/>
    </location>
</feature>
<feature type="turn" evidence="10">
    <location>
        <begin position="240"/>
        <end position="244"/>
    </location>
</feature>
<feature type="helix" evidence="10">
    <location>
        <begin position="245"/>
        <end position="256"/>
    </location>
</feature>
<feature type="helix" evidence="10">
    <location>
        <begin position="259"/>
        <end position="261"/>
    </location>
</feature>
<feature type="helix" evidence="10">
    <location>
        <begin position="262"/>
        <end position="271"/>
    </location>
</feature>
<feature type="helix" evidence="10">
    <location>
        <begin position="291"/>
        <end position="304"/>
    </location>
</feature>
<feature type="helix" evidence="10">
    <location>
        <begin position="308"/>
        <end position="325"/>
    </location>
</feature>
<feature type="helix" evidence="10">
    <location>
        <begin position="332"/>
        <end position="342"/>
    </location>
</feature>
<feature type="helix" evidence="10">
    <location>
        <begin position="346"/>
        <end position="348"/>
    </location>
</feature>
<feature type="helix" evidence="10">
    <location>
        <begin position="349"/>
        <end position="370"/>
    </location>
</feature>
<feature type="strand" evidence="10">
    <location>
        <begin position="378"/>
        <end position="381"/>
    </location>
</feature>
<sequence>MTGPLAAARSVAATKSMTAPTVDERPDIKKGLAGVVVDTTAISKVVPQTNSLTYRGYPVQDLAARCSFEQVAFLLWRGELPTDAELALFSQRERASRRVDRSMLSLLAKLPDNCHPMDVVRTAISYLGAEDPDEDDAAANRAKAMRMMAVLPTIVAIDMRRRRGLPPIAPHSGLGYAQNFLHMCFGEVPETAVVSAFEQSMILYAEHGFNASTFAARVVTSTQSDIYSAVTGAIGALKGRLHGGANEAVMHDMIEIGDPANAREWLRAKLARKEKIMGFGHRVYRHGDSRVPTMKRALERVGTVRDGQRWLDIYQVLAAEMASATGILPNLDFPTGPAYYLMGFDIASFTPIFVMSRITGWTAHIMEQATANALIRPLSAYCGHEQRVLPGTF</sequence>
<evidence type="ECO:0000250" key="1">
    <source>
        <dbReference type="UniProtKB" id="H8F0D7"/>
    </source>
</evidence>
<evidence type="ECO:0000250" key="2">
    <source>
        <dbReference type="UniProtKB" id="O34002"/>
    </source>
</evidence>
<evidence type="ECO:0000269" key="3">
    <source>
    </source>
</evidence>
<evidence type="ECO:0000269" key="4">
    <source>
    </source>
</evidence>
<evidence type="ECO:0000269" key="5">
    <source>
    </source>
</evidence>
<evidence type="ECO:0000269" key="6">
    <source ref="8"/>
</evidence>
<evidence type="ECO:0000303" key="7">
    <source>
    </source>
</evidence>
<evidence type="ECO:0000305" key="8"/>
<evidence type="ECO:0000305" key="9">
    <source>
    </source>
</evidence>
<evidence type="ECO:0007829" key="10">
    <source>
        <dbReference type="PDB" id="3HWK"/>
    </source>
</evidence>